<name>MCLA_CHLAU</name>
<accession>S5N020</accession>
<organism>
    <name type="scientific">Chloroflexus aurantiacus</name>
    <dbReference type="NCBI Taxonomy" id="1108"/>
    <lineage>
        <taxon>Bacteria</taxon>
        <taxon>Bacillati</taxon>
        <taxon>Chloroflexota</taxon>
        <taxon>Chloroflexia</taxon>
        <taxon>Chloroflexales</taxon>
        <taxon>Chloroflexineae</taxon>
        <taxon>Chloroflexaceae</taxon>
        <taxon>Chloroflexus</taxon>
    </lineage>
</organism>
<reference key="1">
    <citation type="journal article" date="2002" name="J. Bacteriol.">
        <title>L-Malyl-coenzyme A lyase/beta-methylmalyl-coenzyme A lyase from Chloroflexus aurantiacus, a bifunctional enzyme involved in autotrophic CO(2) fixation.</title>
        <authorList>
            <person name="Herter S."/>
            <person name="Busch A."/>
            <person name="Fuchs G."/>
        </authorList>
    </citation>
    <scope>NUCLEOTIDE SEQUENCE [GENOMIC DNA]</scope>
    <scope>FUNCTION</scope>
    <scope>CATALYTIC ACTIVITY</scope>
    <scope>BIOPHYSICOCHEMICAL PROPERTIES</scope>
    <scope>ACTIVITY REGULATION</scope>
    <scope>SUBUNIT</scope>
    <source>
        <strain>DSM 636 / OK-70-fl</strain>
    </source>
</reference>
<reference key="2">
    <citation type="journal article" date="2009" name="Proc. Natl. Acad. Sci. U.S.A.">
        <title>Identifying the missing steps of the autotrophic 3-hydroxypropionate CO2 fixation cycle in Chloroflexus aurantiacus.</title>
        <authorList>
            <person name="Zarzycki J."/>
            <person name="Brecht V."/>
            <person name="Muller M."/>
            <person name="Fuchs G."/>
        </authorList>
    </citation>
    <scope>NUCLEOTIDE SEQUENCE [GENOMIC DNA]</scope>
    <scope>FUNCTION AS A CITRAMALYL-COA LYASE</scope>
    <scope>BIOPHYSICOCHEMICAL PROPERTIES</scope>
    <source>
        <strain>DSM 636 / OK-70-fl</strain>
    </source>
</reference>
<reference key="3">
    <citation type="journal article" date="2007" name="J. Bacteriol.">
        <title>Properties of R-citramalyl-coenzyme A lyase and its role in the autotrophic 3-hydroxypropionate cycle of Chloroflexus aurantiacus.</title>
        <authorList>
            <person name="Friedmann S."/>
            <person name="Alber B.E."/>
            <person name="Fuchs G."/>
        </authorList>
    </citation>
    <scope>FUNCTION</scope>
    <source>
        <strain>DSM 636 / OK-70-fl</strain>
    </source>
</reference>
<reference key="4">
    <citation type="journal article" date="2013" name="BMC Struct. Biol.">
        <title>The crystal structures of the tri-functional Chloroflexus aurantiacus and bi-functional Rhodobacter sphaeroides malyl-CoA lyases and comparison with CitE-like superfamily enzymes and malate synthases.</title>
        <authorList>
            <person name="Zarzycki J."/>
            <person name="Kerfeld C.A."/>
        </authorList>
    </citation>
    <scope>X-RAY CRYSTALLOGRAPHY (2.01 ANGSTROMS) IN COMPLEX WITH SUBSTRATE ANALOGS ANS MAGNESIUM ION</scope>
    <scope>FUNCTION</scope>
    <scope>ACTIVITY REGULATION</scope>
    <scope>COFACTOR</scope>
    <scope>SUBUNIT</scope>
</reference>
<keyword id="KW-0002">3D-structure</keyword>
<keyword id="KW-0120">Carbon dioxide fixation</keyword>
<keyword id="KW-0456">Lyase</keyword>
<keyword id="KW-0460">Magnesium</keyword>
<keyword id="KW-0464">Manganese</keyword>
<keyword id="KW-0479">Metal-binding</keyword>
<protein>
    <recommendedName>
        <fullName>Malyl-CoA/beta-methylmalyl-CoA/citramalyl-CoA lyase</fullName>
        <ecNumber>4.1.3.24</ecNumber>
        <ecNumber>4.1.3.25</ecNumber>
    </recommendedName>
    <alternativeName>
        <fullName>(3S)-3-carboxy-3-hydroxypropanoyl-CoA glyoxylate-lyase</fullName>
    </alternativeName>
    <alternativeName>
        <fullName>(3S)-citramalyl-CoA pyruvate-lyase</fullName>
    </alternativeName>
    <alternativeName>
        <fullName>(S)-citramalyl-CoA lyase</fullName>
    </alternativeName>
    <alternativeName>
        <fullName>Erythro-beta-methylmalyl-CoA</fullName>
    </alternativeName>
    <alternativeName>
        <fullName>L-malyl-CoA lyase</fullName>
    </alternativeName>
</protein>
<comment type="function">
    <text evidence="1 2 3 4">Involved in the 3-hydroxypropionate cycle used for autotrophic carbon dioxide fixation, and in the glyoxylate assimilation cycle used to regenerate acetyl-CoA and produce pyruvate as universal precursor for biosynthesis. As a part of the 3-hydroxypropionate cycle, it catalyzes the cleavage of (S)-malyl-CoA to yield acetyl-CoA and glyoxylate. As part of the glyoxylate assimilation cycle, it catalyzes the condensation of glyoxylate with propionyl-CoA to yield (2R,3S)-beta-methylmalyl-CoA, and catalyzes the cleavage of (S)-citramalyl-CoA to yield acetyl-CoA and pyruvate.</text>
</comment>
<comment type="catalytic activity">
    <reaction evidence="1">
        <text>(S)-malyl-CoA = glyoxylate + acetyl-CoA</text>
        <dbReference type="Rhea" id="RHEA:16629"/>
        <dbReference type="ChEBI" id="CHEBI:36655"/>
        <dbReference type="ChEBI" id="CHEBI:57288"/>
        <dbReference type="ChEBI" id="CHEBI:57317"/>
        <dbReference type="EC" id="4.1.3.24"/>
    </reaction>
</comment>
<comment type="catalytic activity">
    <reaction evidence="1">
        <text>(2R,3S)-beta-methylmalyl-CoA = propanoyl-CoA + glyoxylate</text>
        <dbReference type="Rhea" id="RHEA:38259"/>
        <dbReference type="ChEBI" id="CHEBI:36655"/>
        <dbReference type="ChEBI" id="CHEBI:57392"/>
        <dbReference type="ChEBI" id="CHEBI:75634"/>
        <dbReference type="EC" id="4.1.3.24"/>
    </reaction>
</comment>
<comment type="catalytic activity">
    <reaction evidence="1">
        <text>(3S)-citramalyl-CoA = pyruvate + acetyl-CoA</text>
        <dbReference type="Rhea" id="RHEA:22612"/>
        <dbReference type="ChEBI" id="CHEBI:15361"/>
        <dbReference type="ChEBI" id="CHEBI:57288"/>
        <dbReference type="ChEBI" id="CHEBI:58668"/>
        <dbReference type="EC" id="4.1.3.25"/>
    </reaction>
</comment>
<comment type="cofactor">
    <cofactor evidence="4">
        <name>Mg(2+)</name>
        <dbReference type="ChEBI" id="CHEBI:18420"/>
    </cofactor>
    <cofactor evidence="4">
        <name>Mn(2+)</name>
        <dbReference type="ChEBI" id="CHEBI:29035"/>
    </cofactor>
    <text evidence="4">Divalent cations such as magnesium or manganese.</text>
</comment>
<comment type="activity regulation">
    <text evidence="1 4">Inhibited by oxalate.</text>
</comment>
<comment type="biophysicochemical properties">
    <kinetics>
        <KM evidence="1 3">10 uM for (S)-malyl-CoA (for L-malyl-CoA lyase activity)</KM>
        <KM evidence="1 3">89 uM for (2R,3S)-beta-methylmalyl-CoA (for beta-methylmalyl-CoA lyase activity)</KM>
        <KM evidence="1 3">360 uM for acetyl-CoA (for L-malyl-CoA lyase activity)</KM>
        <KM evidence="1 3">1200 uM for propionyl-CoA (for beta-methylmalyl-CoA lyase activity)</KM>
        <KM evidence="1 3">2000 uM for glyoxylate (for beta-methylmalyl-CoA and L-malyl-CoA lyase activities)</KM>
    </kinetics>
    <phDependence>
        <text evidence="1 3">Optimum pH is 7.1.</text>
    </phDependence>
    <temperatureDependence>
        <text evidence="1 3">Optimum temperature is 70 degrees Celsius.</text>
    </temperatureDependence>
</comment>
<comment type="subunit">
    <text evidence="1 4">Homohexamer. Dimer of trimers.</text>
</comment>
<comment type="similarity">
    <text evidence="5">Belongs to the HpcH/HpaI aldolase family.</text>
</comment>
<sequence length="348" mass="38367">MRKLAHNFYKPLAIGAPEPIRELPVRPERVVHFFPPHVEKIRARIPEVAKQVDVLCGNLEDAIPMDAKEAARNGFIEVVKATDFGDTALWVRVNALNSPWVLDDIAEIVAAVGNKLDVIMIPKVEGPWDIHFVDQYLALLEARHQIKKPILIHALLETAQGMVNLEEIAGASPRMHGFSLGPADLAASRGMKTTRVGGGHPFYGVLADPQEGQAERPFYQQDLWHYTIARMVDVAVAHGLRAFYGPFGDIKDEAACEAQFRNAFLLGCTGAWSLAPNQIPIAKRVFSPDVNEVLFAKRILEAMPDGSGVAMIDGKMQDDATWKQAKVIVDLARMIAKKDPDLAQAYGL</sequence>
<feature type="chain" id="PRO_0000429764" description="Malyl-CoA/beta-methylmalyl-CoA/citramalyl-CoA lyase">
    <location>
        <begin position="1"/>
        <end position="348"/>
    </location>
</feature>
<feature type="binding site">
    <location>
        <begin position="32"/>
        <end position="33"/>
    </location>
    <ligand>
        <name>substrate</name>
    </ligand>
</feature>
<feature type="binding site">
    <location>
        <position position="40"/>
    </location>
    <ligand>
        <name>substrate</name>
    </ligand>
</feature>
<feature type="binding site">
    <location>
        <position position="92"/>
    </location>
    <ligand>
        <name>substrate</name>
    </ligand>
</feature>
<feature type="binding site" evidence="4 6">
    <location>
        <position position="157"/>
    </location>
    <ligand>
        <name>Mg(2+)</name>
        <dbReference type="ChEBI" id="CHEBI:18420"/>
    </ligand>
</feature>
<feature type="binding site">
    <location>
        <begin position="183"/>
        <end position="184"/>
    </location>
    <ligand>
        <name>substrate</name>
    </ligand>
</feature>
<feature type="binding site" evidence="4 6">
    <location>
        <position position="184"/>
    </location>
    <ligand>
        <name>Mg(2+)</name>
        <dbReference type="ChEBI" id="CHEBI:18420"/>
    </ligand>
</feature>
<feature type="binding site">
    <location>
        <position position="274"/>
    </location>
    <ligand>
        <name>substrate</name>
    </ligand>
</feature>
<feature type="helix" evidence="8">
    <location>
        <begin position="5"/>
        <end position="8"/>
    </location>
</feature>
<feature type="strand" evidence="8">
    <location>
        <begin position="29"/>
        <end position="34"/>
    </location>
</feature>
<feature type="helix" evidence="8">
    <location>
        <begin position="39"/>
        <end position="49"/>
    </location>
</feature>
<feature type="strand" evidence="8">
    <location>
        <begin position="53"/>
        <end position="58"/>
    </location>
</feature>
<feature type="helix" evidence="8">
    <location>
        <begin position="65"/>
        <end position="67"/>
    </location>
</feature>
<feature type="helix" evidence="8">
    <location>
        <begin position="68"/>
        <end position="80"/>
    </location>
</feature>
<feature type="strand" evidence="8">
    <location>
        <begin position="87"/>
        <end position="92"/>
    </location>
</feature>
<feature type="strand" evidence="7">
    <location>
        <begin position="98"/>
        <end position="100"/>
    </location>
</feature>
<feature type="helix" evidence="8">
    <location>
        <begin position="101"/>
        <end position="112"/>
    </location>
</feature>
<feature type="turn" evidence="8">
    <location>
        <begin position="113"/>
        <end position="115"/>
    </location>
</feature>
<feature type="strand" evidence="8">
    <location>
        <begin position="118"/>
        <end position="123"/>
    </location>
</feature>
<feature type="helix" evidence="8">
    <location>
        <begin position="127"/>
        <end position="143"/>
    </location>
</feature>
<feature type="strand" evidence="8">
    <location>
        <begin position="151"/>
        <end position="156"/>
    </location>
</feature>
<feature type="helix" evidence="8">
    <location>
        <begin position="159"/>
        <end position="163"/>
    </location>
</feature>
<feature type="helix" evidence="8">
    <location>
        <begin position="165"/>
        <end position="169"/>
    </location>
</feature>
<feature type="strand" evidence="8">
    <location>
        <begin position="175"/>
        <end position="180"/>
    </location>
</feature>
<feature type="helix" evidence="8">
    <location>
        <begin position="182"/>
        <end position="189"/>
    </location>
</feature>
<feature type="strand" evidence="8">
    <location>
        <begin position="204"/>
        <end position="206"/>
    </location>
</feature>
<feature type="strand" evidence="8">
    <location>
        <begin position="218"/>
        <end position="220"/>
    </location>
</feature>
<feature type="helix" evidence="8">
    <location>
        <begin position="225"/>
        <end position="237"/>
    </location>
</feature>
<feature type="strand" evidence="8">
    <location>
        <begin position="241"/>
        <end position="244"/>
    </location>
</feature>
<feature type="helix" evidence="8">
    <location>
        <begin position="253"/>
        <end position="266"/>
    </location>
</feature>
<feature type="strand" evidence="8">
    <location>
        <begin position="270"/>
        <end position="275"/>
    </location>
</feature>
<feature type="helix" evidence="8">
    <location>
        <begin position="278"/>
        <end position="285"/>
    </location>
</feature>
<feature type="helix" evidence="8">
    <location>
        <begin position="290"/>
        <end position="302"/>
    </location>
</feature>
<feature type="strand" evidence="7">
    <location>
        <begin position="303"/>
        <end position="306"/>
    </location>
</feature>
<feature type="strand" evidence="8">
    <location>
        <begin position="308"/>
        <end position="312"/>
    </location>
</feature>
<feature type="strand" evidence="8">
    <location>
        <begin position="315"/>
        <end position="318"/>
    </location>
</feature>
<feature type="helix" evidence="8">
    <location>
        <begin position="319"/>
        <end position="336"/>
    </location>
</feature>
<feature type="helix" evidence="8">
    <location>
        <begin position="341"/>
        <end position="344"/>
    </location>
</feature>
<proteinExistence type="evidence at protein level"/>
<dbReference type="EC" id="4.1.3.24"/>
<dbReference type="EC" id="4.1.3.25"/>
<dbReference type="EMBL" id="KF240561">
    <property type="protein sequence ID" value="AGR55786.1"/>
    <property type="molecule type" value="Genomic_DNA"/>
</dbReference>
<dbReference type="RefSeq" id="WP_012256084.1">
    <property type="nucleotide sequence ID" value="NZ_DOPW01000016.1"/>
</dbReference>
<dbReference type="PDB" id="4L7Z">
    <property type="method" value="X-ray"/>
    <property type="resolution" value="2.50 A"/>
    <property type="chains" value="A/B/C/D/E/F=1-348"/>
</dbReference>
<dbReference type="PDB" id="4L80">
    <property type="method" value="X-ray"/>
    <property type="resolution" value="2.01 A"/>
    <property type="chains" value="A/B/C/D/E/F=1-348"/>
</dbReference>
<dbReference type="PDBsum" id="4L7Z"/>
<dbReference type="PDBsum" id="4L80"/>
<dbReference type="SMR" id="S5N020"/>
<dbReference type="OMA" id="AWLFCPA"/>
<dbReference type="BRENDA" id="4.1.3.24">
    <property type="organism ID" value="1352"/>
</dbReference>
<dbReference type="BRENDA" id="4.1.3.25">
    <property type="organism ID" value="1352"/>
</dbReference>
<dbReference type="EvolutionaryTrace" id="S5N020"/>
<dbReference type="GO" id="GO:0047777">
    <property type="term" value="F:(S)-citramalyl-CoA lyase activity"/>
    <property type="evidence" value="ECO:0000314"/>
    <property type="project" value="UniProtKB"/>
</dbReference>
<dbReference type="GO" id="GO:0043959">
    <property type="term" value="F:L-erythro-3-methylmalyl-CoA lyase activity"/>
    <property type="evidence" value="ECO:0007669"/>
    <property type="project" value="RHEA"/>
</dbReference>
<dbReference type="GO" id="GO:0000287">
    <property type="term" value="F:magnesium ion binding"/>
    <property type="evidence" value="ECO:0007669"/>
    <property type="project" value="TreeGrafter"/>
</dbReference>
<dbReference type="GO" id="GO:0050083">
    <property type="term" value="F:malyl-CoA lyase activity"/>
    <property type="evidence" value="ECO:0000314"/>
    <property type="project" value="UniProtKB"/>
</dbReference>
<dbReference type="GO" id="GO:0046872">
    <property type="term" value="F:metal ion binding"/>
    <property type="evidence" value="ECO:0000314"/>
    <property type="project" value="UniProtKB"/>
</dbReference>
<dbReference type="GO" id="GO:0043427">
    <property type="term" value="P:carbon fixation by 3-hydroxypropionate cycle"/>
    <property type="evidence" value="ECO:0000314"/>
    <property type="project" value="UniProtKB"/>
</dbReference>
<dbReference type="GO" id="GO:0006107">
    <property type="term" value="P:oxaloacetate metabolic process"/>
    <property type="evidence" value="ECO:0007669"/>
    <property type="project" value="TreeGrafter"/>
</dbReference>
<dbReference type="FunFam" id="3.20.20.60:FF:000086">
    <property type="entry name" value="Malyl-CoA/beta-methylmalyl-CoA/citramalyl-CoA lyase"/>
    <property type="match status" value="1"/>
</dbReference>
<dbReference type="Gene3D" id="3.20.20.60">
    <property type="entry name" value="Phosphoenolpyruvate-binding domains"/>
    <property type="match status" value="1"/>
</dbReference>
<dbReference type="InterPro" id="IPR005000">
    <property type="entry name" value="Aldolase/citrate-lyase_domain"/>
</dbReference>
<dbReference type="InterPro" id="IPR011206">
    <property type="entry name" value="Citrate_lyase_beta/mcl1/mcl2"/>
</dbReference>
<dbReference type="InterPro" id="IPR015813">
    <property type="entry name" value="Pyrv/PenolPyrv_kinase-like_dom"/>
</dbReference>
<dbReference type="InterPro" id="IPR040442">
    <property type="entry name" value="Pyrv_kinase-like_dom_sf"/>
</dbReference>
<dbReference type="PANTHER" id="PTHR32308:SF10">
    <property type="entry name" value="CITRATE LYASE SUBUNIT BETA"/>
    <property type="match status" value="1"/>
</dbReference>
<dbReference type="PANTHER" id="PTHR32308">
    <property type="entry name" value="LYASE BETA SUBUNIT, PUTATIVE (AFU_ORTHOLOGUE AFUA_4G13030)-RELATED"/>
    <property type="match status" value="1"/>
</dbReference>
<dbReference type="Pfam" id="PF03328">
    <property type="entry name" value="HpcH_HpaI"/>
    <property type="match status" value="1"/>
</dbReference>
<dbReference type="PIRSF" id="PIRSF015582">
    <property type="entry name" value="Cit_lyase_B"/>
    <property type="match status" value="1"/>
</dbReference>
<dbReference type="SUPFAM" id="SSF51621">
    <property type="entry name" value="Phosphoenolpyruvate/pyruvate domain"/>
    <property type="match status" value="1"/>
</dbReference>
<evidence type="ECO:0000269" key="1">
    <source>
    </source>
</evidence>
<evidence type="ECO:0000269" key="2">
    <source>
    </source>
</evidence>
<evidence type="ECO:0000269" key="3">
    <source>
    </source>
</evidence>
<evidence type="ECO:0000269" key="4">
    <source>
    </source>
</evidence>
<evidence type="ECO:0000305" key="5"/>
<evidence type="ECO:0007744" key="6">
    <source>
        <dbReference type="PDB" id="4L80"/>
    </source>
</evidence>
<evidence type="ECO:0007829" key="7">
    <source>
        <dbReference type="PDB" id="4L7Z"/>
    </source>
</evidence>
<evidence type="ECO:0007829" key="8">
    <source>
        <dbReference type="PDB" id="4L80"/>
    </source>
</evidence>
<gene>
    <name type="primary">mcl</name>
</gene>